<reference key="1">
    <citation type="journal article" date="2008" name="FEMS Yeast Res.">
        <title>Comparative genome analysis of a Saccharomyces cerevisiae wine strain.</title>
        <authorList>
            <person name="Borneman A.R."/>
            <person name="Forgan A.H."/>
            <person name="Pretorius I.S."/>
            <person name="Chambers P.J."/>
        </authorList>
    </citation>
    <scope>NUCLEOTIDE SEQUENCE [LARGE SCALE GENOMIC DNA]</scope>
    <source>
        <strain>AWRI1631</strain>
    </source>
</reference>
<gene>
    <name type="primary">PEP1</name>
    <name type="synonym">VPS10</name>
    <name type="synonym">VPT1</name>
    <name type="ORF">AWRI1631_20820</name>
</gene>
<accession>B5VDW2</accession>
<comment type="function">
    <text evidence="1">Functions as a sorting receptor in the Golgi compartment required for the intracellular sorting and delivery of soluble vacuolar proteins, like carboxypeptidase Y (CPY) and proteinase A. Executes multiple rounds of sorting by cycling between the late Golgi and a prevacuolar endosome-like compartment. Binds the Golgi-modified P2 form of CPY, and this interaction is dependent on the presence of an intact CPY vacuolar protein sorting signal (By similarity).</text>
</comment>
<comment type="subcellular location">
    <subcellularLocation>
        <location evidence="1">Golgi apparatus</location>
        <location evidence="1">trans-Golgi network membrane</location>
        <topology evidence="1">Single-pass type I membrane protein</topology>
    </subcellularLocation>
    <subcellularLocation>
        <location evidence="1">Prevacuolar compartment membrane</location>
        <topology evidence="1">Single-pass type I membrane protein</topology>
    </subcellularLocation>
    <text evidence="1">Cycles between the Golgi apparatus and the prevacuolar compartment.</text>
</comment>
<comment type="similarity">
    <text evidence="4">Belongs to the VPS10-related sortilin family.</text>
</comment>
<name>VPS10_YEAS6</name>
<sequence>MILLHFVYSLWALLLIPLINAEEFTPKVTKTIAQDSFEILSFDDSNTLIRKQDASVTISFDDGETWEKVEGIEDEITWIYIDPFNRHDRAVATSMYESRLYITNDQGKSWERITLPDSEKNISSRGCYIETHPLNKNYFLAKCNYCEKTEVDNEENSGDEEGAPVIFNITHCTDKVFASNDGGKSFSEIKSSLERNENSAISISDCGFAKTGKDSDLESSDTSIICLFQNMQLIMDEFSSPYTESKLVLTTDWGKSLKEFDQFKDKVVNGYRILKSHMVVITQGDRYNDMSSMDVWVSNDLSNFKMAYMPTQLRHSMQGEIYEDAMGRIILPMSRERSDQEEDKGIVSEILISDSQGLKFSPIPWTANEVFGYINLYQPTYLKGTMIASLYPLSRRRNRKGKAKGVKNKGVTKISVDNGLTWTVLKVVDPDNADSFDCDITDFENCSLQNMFYTREGSTPTAGILMTTGIVGDGSVFDWGDQRTFISRDGGLTWKLAFDFPCLYAVGDYGNVIVAIPYNADEDDDPQSEFYYSLDQGKTWTEYQLETTIYPNEVMNTTPDGSGAKFILNGFTLAHMDGTTNFIYAIDFSTAFNDKTCEENDFEDWNLAEGKCVNGVKYKIRRRKQDAQCLVKKVFEDLQLFETACDKCTEADYECAFEFVRDATGKCVPDYNLIVLSDVCDKTKKKTVPVKPLQLVKGDKCKKPMTVKSVDISCEGVPKKGTNDKEIVVTENKFDFKIQFYQYFDTVTDESLLMINSRGEAYISHDGGQTIRRFDSNGETIIEVVFNPYYNSSAYLFGSKGSIFSTHDRGYSFMTAKLPEARQLGMPLDFNAKAQDTFIYYGGKNCESILSPECHAVAYLTNDGGETFTEMLDNAIHCEFAGSLFKYPSNEDMVMCQVKEKSSQTRSLVSSTDFFQDDKNTVFENIIGYLSTGGYIIVAVPHENNELRAYVTIDGTEFAEAKFPYDEDVGKQEAFTILESEKGSIFLHLATNLVPGRDFGNLLKSNSNGTSFVTLEHAVNRNTFGYVDFEKIQGLEGIILTNIVSNSDKVAENKEDKQLKTKITFNEGSDWNFLKPPKRDSEGKKFSCSSKSLDECSLHLHGYTERKDIRDTYSSGSALGMMFGVGNVGPNLLPYKECSTFFTTDGGETWAEVKKTPHQWEYGDHGGILVLVPENSETDSISYSTDFGKTWKDYKFCADKVLVKDITTVPRDSALRFLLFGEAADIGGSSFRTYTIDFRNIFERQCDFDITGKESADYKYSPLSSKSNCLFGHQTEFLRKTDENCFIGNIPLSEFSRNIKNCSCTRQDFECDYNFYKANDGTCKLVKGLSPANAADVCKKEPDLIEYFESSGYRKIPLSTCEGGLKLDAPSSPHACPGKEKEFKEKYSVSAGPFAFIFISILLIIFFAAWFVYDRGIRRNGGFARFGEIRLGDDGLIENNNTDRVVNNIVKSGFYVFSNIGSLLQHTKTNIAHVISKIRGRFGNRTGPSYSSLIHDQFLDEADDLLAGHDEDANDLSSFMDQGSNFEIEEDDVPTLEEEHTSYTDQPTTTDVPDALPEGNEENIDRPDSTAPSNENQ</sequence>
<keyword id="KW-0325">Glycoprotein</keyword>
<keyword id="KW-0333">Golgi apparatus</keyword>
<keyword id="KW-0472">Membrane</keyword>
<keyword id="KW-0653">Protein transport</keyword>
<keyword id="KW-0675">Receptor</keyword>
<keyword id="KW-0677">Repeat</keyword>
<keyword id="KW-0732">Signal</keyword>
<keyword id="KW-0812">Transmembrane</keyword>
<keyword id="KW-1133">Transmembrane helix</keyword>
<keyword id="KW-0813">Transport</keyword>
<dbReference type="EMBL" id="ABSV01000082">
    <property type="protein sequence ID" value="EDZ73884.1"/>
    <property type="molecule type" value="Genomic_DNA"/>
</dbReference>
<dbReference type="SMR" id="B5VDW2"/>
<dbReference type="GlyCosmos" id="B5VDW2">
    <property type="glycosylation" value="6 sites, No reported glycans"/>
</dbReference>
<dbReference type="Proteomes" id="UP000008988">
    <property type="component" value="Unassembled WGS sequence"/>
</dbReference>
<dbReference type="GO" id="GO:0005829">
    <property type="term" value="C:cytosol"/>
    <property type="evidence" value="ECO:0007669"/>
    <property type="project" value="GOC"/>
</dbReference>
<dbReference type="GO" id="GO:0005794">
    <property type="term" value="C:Golgi apparatus"/>
    <property type="evidence" value="ECO:0007669"/>
    <property type="project" value="UniProtKB-SubCell"/>
</dbReference>
<dbReference type="GO" id="GO:0016020">
    <property type="term" value="C:membrane"/>
    <property type="evidence" value="ECO:0007669"/>
    <property type="project" value="UniProtKB-KW"/>
</dbReference>
<dbReference type="GO" id="GO:0006895">
    <property type="term" value="P:Golgi to endosome transport"/>
    <property type="evidence" value="ECO:0007669"/>
    <property type="project" value="TreeGrafter"/>
</dbReference>
<dbReference type="GO" id="GO:0006896">
    <property type="term" value="P:Golgi to vacuole transport"/>
    <property type="evidence" value="ECO:0007669"/>
    <property type="project" value="TreeGrafter"/>
</dbReference>
<dbReference type="GO" id="GO:0006623">
    <property type="term" value="P:protein targeting to vacuole"/>
    <property type="evidence" value="ECO:0007669"/>
    <property type="project" value="TreeGrafter"/>
</dbReference>
<dbReference type="CDD" id="cd15482">
    <property type="entry name" value="Sialidase_non-viral"/>
    <property type="match status" value="2"/>
</dbReference>
<dbReference type="FunFam" id="3.30.60.270:FF:000005">
    <property type="entry name" value="Sortilin"/>
    <property type="match status" value="1"/>
</dbReference>
<dbReference type="FunFam" id="2.130.10.10:FF:001564">
    <property type="entry name" value="Vacuolar protein sorting/targeting protein PEP1"/>
    <property type="match status" value="1"/>
</dbReference>
<dbReference type="FunFam" id="3.30.60.270:FF:000008">
    <property type="entry name" value="Vacuolar protein sorting/targeting protein PEP1"/>
    <property type="match status" value="1"/>
</dbReference>
<dbReference type="FunFam" id="2.130.10.10:FF:000998">
    <property type="entry name" value="VPS10 homolog 2"/>
    <property type="match status" value="1"/>
</dbReference>
<dbReference type="Gene3D" id="2.10.70.80">
    <property type="match status" value="1"/>
</dbReference>
<dbReference type="Gene3D" id="2.120.10.10">
    <property type="match status" value="1"/>
</dbReference>
<dbReference type="Gene3D" id="3.30.60.270">
    <property type="match status" value="2"/>
</dbReference>
<dbReference type="Gene3D" id="2.130.10.10">
    <property type="entry name" value="YVTN repeat-like/Quinoprotein amine dehydrogenase"/>
    <property type="match status" value="3"/>
</dbReference>
<dbReference type="InterPro" id="IPR036278">
    <property type="entry name" value="Sialidase_sf"/>
</dbReference>
<dbReference type="InterPro" id="IPR031777">
    <property type="entry name" value="Sortilin_C"/>
</dbReference>
<dbReference type="InterPro" id="IPR031778">
    <property type="entry name" value="Sortilin_N"/>
</dbReference>
<dbReference type="InterPro" id="IPR006581">
    <property type="entry name" value="VPS10"/>
</dbReference>
<dbReference type="InterPro" id="IPR050310">
    <property type="entry name" value="VPS10-sortilin"/>
</dbReference>
<dbReference type="InterPro" id="IPR015943">
    <property type="entry name" value="WD40/YVTN_repeat-like_dom_sf"/>
</dbReference>
<dbReference type="PANTHER" id="PTHR12106">
    <property type="entry name" value="SORTILIN RELATED"/>
    <property type="match status" value="1"/>
</dbReference>
<dbReference type="PANTHER" id="PTHR12106:SF27">
    <property type="entry name" value="SORTILIN-RELATED RECEPTOR"/>
    <property type="match status" value="1"/>
</dbReference>
<dbReference type="Pfam" id="PF15902">
    <property type="entry name" value="Sortilin-Vps10"/>
    <property type="match status" value="2"/>
</dbReference>
<dbReference type="Pfam" id="PF15901">
    <property type="entry name" value="Sortilin_C"/>
    <property type="match status" value="2"/>
</dbReference>
<dbReference type="SMART" id="SM00602">
    <property type="entry name" value="VPS10"/>
    <property type="match status" value="2"/>
</dbReference>
<dbReference type="SUPFAM" id="SSF110296">
    <property type="entry name" value="Oligoxyloglucan reducing end-specific cellobiohydrolase"/>
    <property type="match status" value="2"/>
</dbReference>
<dbReference type="SUPFAM" id="SSF50939">
    <property type="entry name" value="Sialidases"/>
    <property type="match status" value="1"/>
</dbReference>
<protein>
    <recommendedName>
        <fullName>Vacuolar protein sorting/targeting protein PEP1</fullName>
    </recommendedName>
    <alternativeName>
        <fullName>Carboxypeptidase Y receptor</fullName>
        <shortName>CPY receptor</shortName>
    </alternativeName>
    <alternativeName>
        <fullName>Carboxypeptidase Y-deficient protein 1</fullName>
    </alternativeName>
    <alternativeName>
        <fullName>Sortilin VPS10</fullName>
    </alternativeName>
    <alternativeName>
        <fullName>Vacuolar carboxypeptidase sorting receptor VPS10</fullName>
    </alternativeName>
    <alternativeName>
        <fullName>Vacuolar protein sorting-associated protein 10</fullName>
    </alternativeName>
    <alternativeName>
        <fullName>Vacuolar protein-targeting protein 1</fullName>
    </alternativeName>
</protein>
<proteinExistence type="inferred from homology"/>
<feature type="signal peptide" evidence="2">
    <location>
        <begin position="1"/>
        <end position="21"/>
    </location>
</feature>
<feature type="chain" id="PRO_0000407545" description="Vacuolar protein sorting/targeting protein PEP1">
    <location>
        <begin position="22"/>
        <end position="1577"/>
    </location>
</feature>
<feature type="topological domain" description="Lumenal" evidence="2">
    <location>
        <begin position="22"/>
        <end position="1391"/>
    </location>
</feature>
<feature type="transmembrane region" description="Helical" evidence="2">
    <location>
        <begin position="1392"/>
        <end position="1412"/>
    </location>
</feature>
<feature type="topological domain" description="Cytoplasmic" evidence="2">
    <location>
        <begin position="1413"/>
        <end position="1577"/>
    </location>
</feature>
<feature type="repeat" description="BNR 1">
    <location>
        <begin position="58"/>
        <end position="68"/>
    </location>
</feature>
<feature type="repeat" description="BNR 2">
    <location>
        <begin position="101"/>
        <end position="111"/>
    </location>
</feature>
<feature type="repeat" description="BNR 3">
    <location>
        <begin position="179"/>
        <end position="187"/>
    </location>
</feature>
<feature type="repeat" description="BNR 4">
    <location>
        <begin position="414"/>
        <end position="423"/>
    </location>
</feature>
<feature type="repeat" description="BNR 5">
    <location>
        <begin position="485"/>
        <end position="495"/>
    </location>
</feature>
<feature type="repeat" description="BNR 6">
    <location>
        <begin position="531"/>
        <end position="541"/>
    </location>
</feature>
<feature type="repeat" description="BNR 7">
    <location>
        <begin position="762"/>
        <end position="771"/>
    </location>
</feature>
<feature type="repeat" description="BNR 8">
    <location>
        <begin position="859"/>
        <end position="869"/>
    </location>
</feature>
<feature type="repeat" description="BNR 9">
    <location>
        <begin position="1141"/>
        <end position="1150"/>
    </location>
</feature>
<feature type="repeat" description="BNR 10">
    <location>
        <begin position="1183"/>
        <end position="1192"/>
    </location>
</feature>
<feature type="region of interest" description="Disordered" evidence="3">
    <location>
        <begin position="1531"/>
        <end position="1577"/>
    </location>
</feature>
<feature type="glycosylation site" description="N-linked (GlcNAc...) asparagine" evidence="2">
    <location>
        <position position="121"/>
    </location>
</feature>
<feature type="glycosylation site" description="N-linked (GlcNAc...) asparagine" evidence="2">
    <location>
        <position position="168"/>
    </location>
</feature>
<feature type="glycosylation site" description="N-linked (GlcNAc...) asparagine" evidence="2">
    <location>
        <position position="445"/>
    </location>
</feature>
<feature type="glycosylation site" description="N-linked (GlcNAc...) asparagine" evidence="2">
    <location>
        <position position="791"/>
    </location>
</feature>
<feature type="glycosylation site" description="N-linked (GlcNAc...) asparagine" evidence="2">
    <location>
        <position position="1008"/>
    </location>
</feature>
<feature type="glycosylation site" description="N-linked (GlcNAc...) asparagine" evidence="2">
    <location>
        <position position="1301"/>
    </location>
</feature>
<organism>
    <name type="scientific">Saccharomyces cerevisiae (strain AWRI1631)</name>
    <name type="common">Baker's yeast</name>
    <dbReference type="NCBI Taxonomy" id="545124"/>
    <lineage>
        <taxon>Eukaryota</taxon>
        <taxon>Fungi</taxon>
        <taxon>Dikarya</taxon>
        <taxon>Ascomycota</taxon>
        <taxon>Saccharomycotina</taxon>
        <taxon>Saccharomycetes</taxon>
        <taxon>Saccharomycetales</taxon>
        <taxon>Saccharomycetaceae</taxon>
        <taxon>Saccharomyces</taxon>
    </lineage>
</organism>
<evidence type="ECO:0000250" key="1"/>
<evidence type="ECO:0000255" key="2"/>
<evidence type="ECO:0000256" key="3">
    <source>
        <dbReference type="SAM" id="MobiDB-lite"/>
    </source>
</evidence>
<evidence type="ECO:0000305" key="4"/>